<dbReference type="EMBL" id="AAFI02000012">
    <property type="protein sequence ID" value="EAL70071.1"/>
    <property type="molecule type" value="Genomic_DNA"/>
</dbReference>
<dbReference type="RefSeq" id="XP_643890.1">
    <property type="nucleotide sequence ID" value="XM_638798.1"/>
</dbReference>
<dbReference type="SMR" id="Q86IV8"/>
<dbReference type="STRING" id="44689.Q86IV8"/>
<dbReference type="PaxDb" id="44689-DDB0237509"/>
<dbReference type="EnsemblProtists" id="EAL70071">
    <property type="protein sequence ID" value="EAL70071"/>
    <property type="gene ID" value="DDB_G0274357"/>
</dbReference>
<dbReference type="GeneID" id="8619316"/>
<dbReference type="KEGG" id="ddi:DDB_G0274357"/>
<dbReference type="dictyBase" id="DDB_G0274357"/>
<dbReference type="VEuPathDB" id="AmoebaDB:DDB_G0274357"/>
<dbReference type="eggNOG" id="KOG0044">
    <property type="taxonomic scope" value="Eukaryota"/>
</dbReference>
<dbReference type="HOGENOM" id="CLU_1436878_0_0_1"/>
<dbReference type="InParanoid" id="Q86IV8"/>
<dbReference type="OMA" id="KKQCPTG"/>
<dbReference type="PhylomeDB" id="Q86IV8"/>
<dbReference type="Reactome" id="R-DDI-2514859">
    <property type="pathway name" value="Inactivation, recovery and regulation of the phototransduction cascade"/>
</dbReference>
<dbReference type="PRO" id="PR:Q86IV8"/>
<dbReference type="Proteomes" id="UP000002195">
    <property type="component" value="Chromosome 2"/>
</dbReference>
<dbReference type="GO" id="GO:0005509">
    <property type="term" value="F:calcium ion binding"/>
    <property type="evidence" value="ECO:0000318"/>
    <property type="project" value="GO_Central"/>
</dbReference>
<dbReference type="GO" id="GO:0009966">
    <property type="term" value="P:regulation of signal transduction"/>
    <property type="evidence" value="ECO:0000318"/>
    <property type="project" value="GO_Central"/>
</dbReference>
<dbReference type="CDD" id="cd00051">
    <property type="entry name" value="EFh"/>
    <property type="match status" value="1"/>
</dbReference>
<dbReference type="Gene3D" id="1.10.238.10">
    <property type="entry name" value="EF-hand"/>
    <property type="match status" value="1"/>
</dbReference>
<dbReference type="InterPro" id="IPR011992">
    <property type="entry name" value="EF-hand-dom_pair"/>
</dbReference>
<dbReference type="InterPro" id="IPR018247">
    <property type="entry name" value="EF_Hand_1_Ca_BS"/>
</dbReference>
<dbReference type="InterPro" id="IPR002048">
    <property type="entry name" value="EF_hand_dom"/>
</dbReference>
<dbReference type="PANTHER" id="PTHR45942">
    <property type="entry name" value="PROTEIN PHOSPATASE 3 REGULATORY SUBUNIT B ALPHA ISOFORM TYPE 1"/>
    <property type="match status" value="1"/>
</dbReference>
<dbReference type="Pfam" id="PF00036">
    <property type="entry name" value="EF-hand_1"/>
    <property type="match status" value="1"/>
</dbReference>
<dbReference type="Pfam" id="PF13202">
    <property type="entry name" value="EF-hand_5"/>
    <property type="match status" value="1"/>
</dbReference>
<dbReference type="PRINTS" id="PR00450">
    <property type="entry name" value="RECOVERIN"/>
</dbReference>
<dbReference type="SMART" id="SM00054">
    <property type="entry name" value="EFh"/>
    <property type="match status" value="2"/>
</dbReference>
<dbReference type="SUPFAM" id="SSF47473">
    <property type="entry name" value="EF-hand"/>
    <property type="match status" value="1"/>
</dbReference>
<dbReference type="PROSITE" id="PS00018">
    <property type="entry name" value="EF_HAND_1"/>
    <property type="match status" value="2"/>
</dbReference>
<dbReference type="PROSITE" id="PS50222">
    <property type="entry name" value="EF_HAND_2"/>
    <property type="match status" value="2"/>
</dbReference>
<name>CBPKL_DICDI</name>
<reference key="1">
    <citation type="journal article" date="2002" name="Nature">
        <title>Sequence and analysis of chromosome 2 of Dictyostelium discoideum.</title>
        <authorList>
            <person name="Gloeckner G."/>
            <person name="Eichinger L."/>
            <person name="Szafranski K."/>
            <person name="Pachebat J.A."/>
            <person name="Bankier A.T."/>
            <person name="Dear P.H."/>
            <person name="Lehmann R."/>
            <person name="Baumgart C."/>
            <person name="Parra G."/>
            <person name="Abril J.F."/>
            <person name="Guigo R."/>
            <person name="Kumpf K."/>
            <person name="Tunggal B."/>
            <person name="Cox E.C."/>
            <person name="Quail M.A."/>
            <person name="Platzer M."/>
            <person name="Rosenthal A."/>
            <person name="Noegel A.A."/>
        </authorList>
    </citation>
    <scope>NUCLEOTIDE SEQUENCE [LARGE SCALE GENOMIC DNA]</scope>
    <source>
        <strain>AX4</strain>
    </source>
</reference>
<reference key="2">
    <citation type="journal article" date="2005" name="Nature">
        <title>The genome of the social amoeba Dictyostelium discoideum.</title>
        <authorList>
            <person name="Eichinger L."/>
            <person name="Pachebat J.A."/>
            <person name="Gloeckner G."/>
            <person name="Rajandream M.A."/>
            <person name="Sucgang R."/>
            <person name="Berriman M."/>
            <person name="Song J."/>
            <person name="Olsen R."/>
            <person name="Szafranski K."/>
            <person name="Xu Q."/>
            <person name="Tunggal B."/>
            <person name="Kummerfeld S."/>
            <person name="Madera M."/>
            <person name="Konfortov B.A."/>
            <person name="Rivero F."/>
            <person name="Bankier A.T."/>
            <person name="Lehmann R."/>
            <person name="Hamlin N."/>
            <person name="Davies R."/>
            <person name="Gaudet P."/>
            <person name="Fey P."/>
            <person name="Pilcher K."/>
            <person name="Chen G."/>
            <person name="Saunders D."/>
            <person name="Sodergren E.J."/>
            <person name="Davis P."/>
            <person name="Kerhornou A."/>
            <person name="Nie X."/>
            <person name="Hall N."/>
            <person name="Anjard C."/>
            <person name="Hemphill L."/>
            <person name="Bason N."/>
            <person name="Farbrother P."/>
            <person name="Desany B."/>
            <person name="Just E."/>
            <person name="Morio T."/>
            <person name="Rost R."/>
            <person name="Churcher C.M."/>
            <person name="Cooper J."/>
            <person name="Haydock S."/>
            <person name="van Driessche N."/>
            <person name="Cronin A."/>
            <person name="Goodhead I."/>
            <person name="Muzny D.M."/>
            <person name="Mourier T."/>
            <person name="Pain A."/>
            <person name="Lu M."/>
            <person name="Harper D."/>
            <person name="Lindsay R."/>
            <person name="Hauser H."/>
            <person name="James K.D."/>
            <person name="Quiles M."/>
            <person name="Madan Babu M."/>
            <person name="Saito T."/>
            <person name="Buchrieser C."/>
            <person name="Wardroper A."/>
            <person name="Felder M."/>
            <person name="Thangavelu M."/>
            <person name="Johnson D."/>
            <person name="Knights A."/>
            <person name="Loulseged H."/>
            <person name="Mungall K.L."/>
            <person name="Oliver K."/>
            <person name="Price C."/>
            <person name="Quail M.A."/>
            <person name="Urushihara H."/>
            <person name="Hernandez J."/>
            <person name="Rabbinowitsch E."/>
            <person name="Steffen D."/>
            <person name="Sanders M."/>
            <person name="Ma J."/>
            <person name="Kohara Y."/>
            <person name="Sharp S."/>
            <person name="Simmonds M.N."/>
            <person name="Spiegler S."/>
            <person name="Tivey A."/>
            <person name="Sugano S."/>
            <person name="White B."/>
            <person name="Walker D."/>
            <person name="Woodward J.R."/>
            <person name="Winckler T."/>
            <person name="Tanaka Y."/>
            <person name="Shaulsky G."/>
            <person name="Schleicher M."/>
            <person name="Weinstock G.M."/>
            <person name="Rosenthal A."/>
            <person name="Cox E.C."/>
            <person name="Chisholm R.L."/>
            <person name="Gibbs R.A."/>
            <person name="Loomis W.F."/>
            <person name="Platzer M."/>
            <person name="Kay R.R."/>
            <person name="Williams J.G."/>
            <person name="Dear P.H."/>
            <person name="Noegel A.A."/>
            <person name="Barrell B.G."/>
            <person name="Kuspa A."/>
        </authorList>
    </citation>
    <scope>NUCLEOTIDE SEQUENCE [LARGE SCALE GENOMIC DNA]</scope>
    <source>
        <strain>AX4</strain>
    </source>
</reference>
<protein>
    <recommendedName>
        <fullName>Calcium-binding protein K-like</fullName>
    </recommendedName>
</protein>
<evidence type="ECO:0000255" key="1">
    <source>
        <dbReference type="PROSITE-ProRule" id="PRU00448"/>
    </source>
</evidence>
<evidence type="ECO:0000305" key="2"/>
<comment type="similarity">
    <text evidence="2">Belongs to the recoverin family.</text>
</comment>
<feature type="chain" id="PRO_0000323765" description="Calcium-binding protein K-like">
    <location>
        <begin position="1"/>
        <end position="185"/>
    </location>
</feature>
<feature type="domain" description="EF-hand 1" evidence="1">
    <location>
        <begin position="60"/>
        <end position="95"/>
    </location>
</feature>
<feature type="domain" description="EF-hand 2" evidence="1">
    <location>
        <begin position="96"/>
        <end position="131"/>
    </location>
</feature>
<feature type="binding site" evidence="1">
    <location>
        <position position="73"/>
    </location>
    <ligand>
        <name>Ca(2+)</name>
        <dbReference type="ChEBI" id="CHEBI:29108"/>
        <label>1</label>
    </ligand>
</feature>
<feature type="binding site" evidence="1">
    <location>
        <position position="75"/>
    </location>
    <ligand>
        <name>Ca(2+)</name>
        <dbReference type="ChEBI" id="CHEBI:29108"/>
        <label>1</label>
    </ligand>
</feature>
<feature type="binding site" evidence="1">
    <location>
        <position position="77"/>
    </location>
    <ligand>
        <name>Ca(2+)</name>
        <dbReference type="ChEBI" id="CHEBI:29108"/>
        <label>1</label>
    </ligand>
</feature>
<feature type="binding site" evidence="1">
    <location>
        <position position="84"/>
    </location>
    <ligand>
        <name>Ca(2+)</name>
        <dbReference type="ChEBI" id="CHEBI:29108"/>
        <label>1</label>
    </ligand>
</feature>
<feature type="binding site" evidence="1">
    <location>
        <position position="109"/>
    </location>
    <ligand>
        <name>Ca(2+)</name>
        <dbReference type="ChEBI" id="CHEBI:29108"/>
        <label>2</label>
    </ligand>
</feature>
<feature type="binding site" evidence="1">
    <location>
        <position position="111"/>
    </location>
    <ligand>
        <name>Ca(2+)</name>
        <dbReference type="ChEBI" id="CHEBI:29108"/>
        <label>2</label>
    </ligand>
</feature>
<feature type="binding site" evidence="1">
    <location>
        <position position="113"/>
    </location>
    <ligand>
        <name>Ca(2+)</name>
        <dbReference type="ChEBI" id="CHEBI:29108"/>
        <label>2</label>
    </ligand>
</feature>
<feature type="binding site" evidence="1">
    <location>
        <position position="115"/>
    </location>
    <ligand>
        <name>Ca(2+)</name>
        <dbReference type="ChEBI" id="CHEBI:29108"/>
        <label>2</label>
    </ligand>
</feature>
<feature type="binding site" evidence="1">
    <location>
        <position position="120"/>
    </location>
    <ligand>
        <name>Ca(2+)</name>
        <dbReference type="ChEBI" id="CHEBI:29108"/>
        <label>2</label>
    </ligand>
</feature>
<organism>
    <name type="scientific">Dictyostelium discoideum</name>
    <name type="common">Social amoeba</name>
    <dbReference type="NCBI Taxonomy" id="44689"/>
    <lineage>
        <taxon>Eukaryota</taxon>
        <taxon>Amoebozoa</taxon>
        <taxon>Evosea</taxon>
        <taxon>Eumycetozoa</taxon>
        <taxon>Dictyostelia</taxon>
        <taxon>Dictyosteliales</taxon>
        <taxon>Dictyosteliaceae</taxon>
        <taxon>Dictyostelium</taxon>
    </lineage>
</organism>
<accession>Q86IV8</accession>
<accession>Q556C0</accession>
<sequence>MGNSKLSKEEKDEIMKKTKYTSGDIEQLTKDFKVAAASDKKAGFSQEEFIKFFRIRFNEWDEASMVRMFKLFDSDGNGVIDVKEFITALYMMTRAPTTDKLGFLFDLFDSDKSGYLEAGEIEKLVNIVVVCSSAMGYTTSEAIDFVYSITSIKISREEFVKSASQSDKFVRMICFYDNPCKQLLY</sequence>
<gene>
    <name type="ORF">DDB_G0274357</name>
</gene>
<keyword id="KW-0106">Calcium</keyword>
<keyword id="KW-0479">Metal-binding</keyword>
<keyword id="KW-1185">Reference proteome</keyword>
<keyword id="KW-0677">Repeat</keyword>
<proteinExistence type="inferred from homology"/>